<dbReference type="EMBL" id="AY509253">
    <property type="protein sequence ID" value="AAS01012.1"/>
    <property type="molecule type" value="Genomic_DNA"/>
</dbReference>
<dbReference type="RefSeq" id="YP_024665.1">
    <property type="nucleotide sequence ID" value="NC_005881.2"/>
</dbReference>
<dbReference type="KEGG" id="vg:2948146"/>
<dbReference type="Proteomes" id="UP000007021">
    <property type="component" value="Segment"/>
</dbReference>
<organismHost>
    <name type="scientific">Magallana gigas</name>
    <name type="common">Pacific oyster</name>
    <name type="synonym">Crassostrea gigas</name>
    <dbReference type="NCBI Taxonomy" id="29159"/>
</organismHost>
<organismHost>
    <name type="scientific">Pecten maximus</name>
    <name type="common">King scallop</name>
    <name type="synonym">Pilgrim's clam</name>
    <dbReference type="NCBI Taxonomy" id="6579"/>
</organismHost>
<feature type="chain" id="PRO_0000385134" description="Uncharacterized protein ORF123">
    <location>
        <begin position="1"/>
        <end position="303"/>
    </location>
</feature>
<proteinExistence type="predicted"/>
<protein>
    <recommendedName>
        <fullName>Uncharacterized protein ORF123</fullName>
    </recommendedName>
</protein>
<reference key="1">
    <citation type="journal article" date="2005" name="J. Gen. Virol.">
        <title>A novel class of herpesvirus with bivalve hosts.</title>
        <authorList>
            <person name="Davison A.J."/>
            <person name="Trus B.L."/>
            <person name="Cheng N."/>
            <person name="Steven A.C."/>
            <person name="Watson M.S."/>
            <person name="Cunningham C."/>
            <person name="Le Deuff R.M."/>
            <person name="Renault T."/>
        </authorList>
    </citation>
    <scope>NUCLEOTIDE SEQUENCE [LARGE SCALE GENOMIC DNA]</scope>
</reference>
<organism>
    <name type="scientific">Ostreid herpesvirus 1 (isolate France)</name>
    <name type="common">OsHV-1</name>
    <name type="synonym">Pacific oyster herpesvirus</name>
    <dbReference type="NCBI Taxonomy" id="654903"/>
    <lineage>
        <taxon>Viruses</taxon>
        <taxon>Duplodnaviria</taxon>
        <taxon>Heunggongvirae</taxon>
        <taxon>Peploviricota</taxon>
        <taxon>Herviviricetes</taxon>
        <taxon>Herpesvirales</taxon>
        <taxon>Malacoherpesviridae</taxon>
        <taxon>Ostreavirus</taxon>
        <taxon>Ostreavirus ostreidmalaco1</taxon>
        <taxon>Ostreid herpesvirus 1</taxon>
    </lineage>
</organism>
<accession>Q6R7A3</accession>
<name>Y123_OSHVF</name>
<sequence length="303" mass="34686">MAASILQAENIELRKRLNAVCEYVDMEAKCETAAGKIFYKHCYQTAKNGGTGTGLICMNPDMLHAMELFDEELSLKDNWTNFKNILIKINIGQVITIHGQAIPVNPNHYRNGEGYYLTLVAPKKTEAIDDAVPLLDTEQLYRFIMCYHEIKMDLIDWIERSASLSGLQVKLDSANHALNMAEYVMDTIADPTNEDIVLQCISEVNEMDNAKFGHFLGKLNDLLDSPELKPNSCSDIARKQLRYFYRVDKDSAVNYIADNYFNLDISFKEFLDNFMLKTFYPELNCKNIMFYPIGAKKIVFCMK</sequence>
<keyword id="KW-1185">Reference proteome</keyword>
<gene>
    <name type="ORF">ORF123</name>
</gene>